<evidence type="ECO:0000255" key="1">
    <source>
        <dbReference type="PROSITE-ProRule" id="PRU01133"/>
    </source>
</evidence>
<evidence type="ECO:0000269" key="2">
    <source>
    </source>
</evidence>
<evidence type="ECO:0000269" key="3">
    <source>
    </source>
</evidence>
<evidence type="ECO:0000269" key="4">
    <source>
    </source>
</evidence>
<evidence type="ECO:0000269" key="5">
    <source>
    </source>
</evidence>
<evidence type="ECO:0000303" key="6">
    <source>
    </source>
</evidence>
<evidence type="ECO:0000305" key="7"/>
<evidence type="ECO:0000305" key="8">
    <source>
    </source>
</evidence>
<evidence type="ECO:0000312" key="9">
    <source>
        <dbReference type="Araport" id="AT3G05540"/>
    </source>
</evidence>
<evidence type="ECO:0000312" key="10">
    <source>
        <dbReference type="EMBL" id="AAF26143.1"/>
    </source>
</evidence>
<keyword id="KW-0963">Cytoplasm</keyword>
<keyword id="KW-0539">Nucleus</keyword>
<keyword id="KW-1185">Reference proteome</keyword>
<dbReference type="EMBL" id="KR261461">
    <property type="protein sequence ID" value="AKP17134.1"/>
    <property type="molecule type" value="mRNA"/>
</dbReference>
<dbReference type="EMBL" id="AC011620">
    <property type="protein sequence ID" value="AAF26143.1"/>
    <property type="molecule type" value="Genomic_DNA"/>
</dbReference>
<dbReference type="EMBL" id="CP002686">
    <property type="protein sequence ID" value="AEE74255.1"/>
    <property type="status" value="ALT_SEQ"/>
    <property type="molecule type" value="Genomic_DNA"/>
</dbReference>
<dbReference type="RefSeq" id="NP_187205.4">
    <property type="nucleotide sequence ID" value="NM_111427.4"/>
</dbReference>
<dbReference type="SMR" id="Q9M9V9"/>
<dbReference type="FunCoup" id="Q9M9V9">
    <property type="interactions" value="2232"/>
</dbReference>
<dbReference type="STRING" id="3702.Q9M9V9"/>
<dbReference type="PaxDb" id="3702-AT3G05540.1"/>
<dbReference type="GeneID" id="819719"/>
<dbReference type="KEGG" id="ath:AT3G05540"/>
<dbReference type="Araport" id="AT3G05540"/>
<dbReference type="TAIR" id="AT3G05540"/>
<dbReference type="eggNOG" id="KOG1727">
    <property type="taxonomic scope" value="Eukaryota"/>
</dbReference>
<dbReference type="InParanoid" id="Q9M9V9"/>
<dbReference type="PhylomeDB" id="Q9M9V9"/>
<dbReference type="Proteomes" id="UP000006548">
    <property type="component" value="Chromosome 3"/>
</dbReference>
<dbReference type="ExpressionAtlas" id="Q9M9V9">
    <property type="expression patterns" value="baseline and differential"/>
</dbReference>
<dbReference type="GO" id="GO:0005737">
    <property type="term" value="C:cytoplasm"/>
    <property type="evidence" value="ECO:0000318"/>
    <property type="project" value="GO_Central"/>
</dbReference>
<dbReference type="GO" id="GO:0005634">
    <property type="term" value="C:nucleus"/>
    <property type="evidence" value="ECO:0007669"/>
    <property type="project" value="UniProtKB-SubCell"/>
</dbReference>
<dbReference type="GO" id="GO:0005509">
    <property type="term" value="F:calcium ion binding"/>
    <property type="evidence" value="ECO:0000318"/>
    <property type="project" value="GO_Central"/>
</dbReference>
<dbReference type="GO" id="GO:0032502">
    <property type="term" value="P:developmental process"/>
    <property type="evidence" value="ECO:0000315"/>
    <property type="project" value="TAIR"/>
</dbReference>
<dbReference type="GO" id="GO:0042127">
    <property type="term" value="P:regulation of cell population proliferation"/>
    <property type="evidence" value="ECO:0000315"/>
    <property type="project" value="TAIR"/>
</dbReference>
<dbReference type="FunFam" id="2.170.150.10:FF:000003">
    <property type="entry name" value="Translationally-controlled tumor protein homolog"/>
    <property type="match status" value="1"/>
</dbReference>
<dbReference type="Gene3D" id="2.170.150.10">
    <property type="entry name" value="Metal Binding Protein, Guanine Nucleotide Exchange Factor, Chain A"/>
    <property type="match status" value="1"/>
</dbReference>
<dbReference type="InterPro" id="IPR011057">
    <property type="entry name" value="Mss4-like_sf"/>
</dbReference>
<dbReference type="InterPro" id="IPR011323">
    <property type="entry name" value="Mss4/transl-control_tumour"/>
</dbReference>
<dbReference type="InterPro" id="IPR034737">
    <property type="entry name" value="TCTP"/>
</dbReference>
<dbReference type="InterPro" id="IPR018103">
    <property type="entry name" value="Translation_control_tumour_CS"/>
</dbReference>
<dbReference type="InterPro" id="IPR018105">
    <property type="entry name" value="Translational_control_tumour_p"/>
</dbReference>
<dbReference type="PANTHER" id="PTHR11991:SF17">
    <property type="entry name" value="TRANSLATIONALLY CONTROLLED TUMOR PROTEIN 2"/>
    <property type="match status" value="1"/>
</dbReference>
<dbReference type="PANTHER" id="PTHR11991">
    <property type="entry name" value="TRANSLATIONALLY CONTROLLED TUMOR PROTEIN-RELATED"/>
    <property type="match status" value="1"/>
</dbReference>
<dbReference type="Pfam" id="PF00838">
    <property type="entry name" value="TCTP"/>
    <property type="match status" value="1"/>
</dbReference>
<dbReference type="PRINTS" id="PR01653">
    <property type="entry name" value="TCTPROTEIN"/>
</dbReference>
<dbReference type="SUPFAM" id="SSF51316">
    <property type="entry name" value="Mss4-like"/>
    <property type="match status" value="1"/>
</dbReference>
<dbReference type="PROSITE" id="PS01003">
    <property type="entry name" value="TCTP_2"/>
    <property type="match status" value="1"/>
</dbReference>
<dbReference type="PROSITE" id="PS51797">
    <property type="entry name" value="TCTP_3"/>
    <property type="match status" value="1"/>
</dbReference>
<accession>Q9M9V9</accession>
<accession>F4J8E4</accession>
<sequence length="156" mass="18016">MLVYQDILTGDELLSDSFPYKEIENGMLWEVEGKNPSGEEGGEDEGVDDQAVKVVDIIDTFRLQEQPSFDKKQFVMFMKRYIKQLSPKLDSENQELFKKHIESATKFLMSKLKDFQFFVGESMEGEEGSLVFAYYREGATDPTFLYLAYGLKEIKC</sequence>
<proteinExistence type="evidence at protein level"/>
<protein>
    <recommendedName>
        <fullName evidence="6">Translationally controlled tumor protein 2</fullName>
        <shortName evidence="6">AtTCTP2</shortName>
    </recommendedName>
</protein>
<reference key="1">
    <citation type="journal article" date="2014" name="Front. Plant Sci.">
        <title>Long distance movement of an Arabidopsis translationally controlled tumor protein (AtTCTP2) mRNA and protein in tobacco.</title>
        <authorList>
            <person name="Toscano-Morales R."/>
            <person name="Xoconostle-Cazares B."/>
            <person name="Martinez-Navarro A.C."/>
            <person name="Ruiz-Medrano R."/>
        </authorList>
    </citation>
    <scope>NUCLEOTIDE SEQUENCE [MRNA]</scope>
    <scope>FUNCTION</scope>
    <scope>SUBCELLULAR LOCATION</scope>
</reference>
<reference key="2">
    <citation type="journal article" date="2015" name="Front. Plant Sci.">
        <title>AtTCTP2, an Arabidopsis thaliana homolog of Translationally Controlled Tumor Protein, enhances in vitro plant regeneration.</title>
        <authorList>
            <person name="Toscano-Morales R."/>
            <person name="Xoconostle-Cazares B."/>
            <person name="Cabrera-Ponce J.L."/>
            <person name="Hinojosa-Moya J."/>
            <person name="Ruiz-Salas J.L."/>
            <person name="Galvan-Gordillo S.V."/>
            <person name="Guevara-Gonzalez R.G."/>
            <person name="Ruiz-Medrano R."/>
        </authorList>
    </citation>
    <scope>NUCLEOTIDE SEQUENCE [MRNA]</scope>
    <scope>FUNCTION</scope>
    <scope>DISRUPTION PHENOTYPE</scope>
    <scope>TISSUE SPECIFICITY</scope>
    <scope>SUBCELLULAR LOCATION</scope>
    <scope>MUTAGENESIS OF ASN-35</scope>
    <scope>3D-STRUCTURE MODELING</scope>
    <source>
        <strain>cv. Columbia</strain>
    </source>
</reference>
<reference key="3">
    <citation type="journal article" date="2000" name="Nature">
        <title>Sequence and analysis of chromosome 3 of the plant Arabidopsis thaliana.</title>
        <authorList>
            <person name="Salanoubat M."/>
            <person name="Lemcke K."/>
            <person name="Rieger M."/>
            <person name="Ansorge W."/>
            <person name="Unseld M."/>
            <person name="Fartmann B."/>
            <person name="Valle G."/>
            <person name="Bloecker H."/>
            <person name="Perez-Alonso M."/>
            <person name="Obermaier B."/>
            <person name="Delseny M."/>
            <person name="Boutry M."/>
            <person name="Grivell L.A."/>
            <person name="Mache R."/>
            <person name="Puigdomenech P."/>
            <person name="De Simone V."/>
            <person name="Choisne N."/>
            <person name="Artiguenave F."/>
            <person name="Robert C."/>
            <person name="Brottier P."/>
            <person name="Wincker P."/>
            <person name="Cattolico L."/>
            <person name="Weissenbach J."/>
            <person name="Saurin W."/>
            <person name="Quetier F."/>
            <person name="Schaefer M."/>
            <person name="Mueller-Auer S."/>
            <person name="Gabel C."/>
            <person name="Fuchs M."/>
            <person name="Benes V."/>
            <person name="Wurmbach E."/>
            <person name="Drzonek H."/>
            <person name="Erfle H."/>
            <person name="Jordan N."/>
            <person name="Bangert S."/>
            <person name="Wiedelmann R."/>
            <person name="Kranz H."/>
            <person name="Voss H."/>
            <person name="Holland R."/>
            <person name="Brandt P."/>
            <person name="Nyakatura G."/>
            <person name="Vezzi A."/>
            <person name="D'Angelo M."/>
            <person name="Pallavicini A."/>
            <person name="Toppo S."/>
            <person name="Simionati B."/>
            <person name="Conrad A."/>
            <person name="Hornischer K."/>
            <person name="Kauer G."/>
            <person name="Loehnert T.-H."/>
            <person name="Nordsiek G."/>
            <person name="Reichelt J."/>
            <person name="Scharfe M."/>
            <person name="Schoen O."/>
            <person name="Bargues M."/>
            <person name="Terol J."/>
            <person name="Climent J."/>
            <person name="Navarro P."/>
            <person name="Collado C."/>
            <person name="Perez-Perez A."/>
            <person name="Ottenwaelder B."/>
            <person name="Duchemin D."/>
            <person name="Cooke R."/>
            <person name="Laudie M."/>
            <person name="Berger-Llauro C."/>
            <person name="Purnelle B."/>
            <person name="Masuy D."/>
            <person name="de Haan M."/>
            <person name="Maarse A.C."/>
            <person name="Alcaraz J.-P."/>
            <person name="Cottet A."/>
            <person name="Casacuberta E."/>
            <person name="Monfort A."/>
            <person name="Argiriou A."/>
            <person name="Flores M."/>
            <person name="Liguori R."/>
            <person name="Vitale D."/>
            <person name="Mannhaupt G."/>
            <person name="Haase D."/>
            <person name="Schoof H."/>
            <person name="Rudd S."/>
            <person name="Zaccaria P."/>
            <person name="Mewes H.-W."/>
            <person name="Mayer K.F.X."/>
            <person name="Kaul S."/>
            <person name="Town C.D."/>
            <person name="Koo H.L."/>
            <person name="Tallon L.J."/>
            <person name="Jenkins J."/>
            <person name="Rooney T."/>
            <person name="Rizzo M."/>
            <person name="Walts A."/>
            <person name="Utterback T."/>
            <person name="Fujii C.Y."/>
            <person name="Shea T.P."/>
            <person name="Creasy T.H."/>
            <person name="Haas B."/>
            <person name="Maiti R."/>
            <person name="Wu D."/>
            <person name="Peterson J."/>
            <person name="Van Aken S."/>
            <person name="Pai G."/>
            <person name="Militscher J."/>
            <person name="Sellers P."/>
            <person name="Gill J.E."/>
            <person name="Feldblyum T.V."/>
            <person name="Preuss D."/>
            <person name="Lin X."/>
            <person name="Nierman W.C."/>
            <person name="Salzberg S.L."/>
            <person name="White O."/>
            <person name="Venter J.C."/>
            <person name="Fraser C.M."/>
            <person name="Kaneko T."/>
            <person name="Nakamura Y."/>
            <person name="Sato S."/>
            <person name="Kato T."/>
            <person name="Asamizu E."/>
            <person name="Sasamoto S."/>
            <person name="Kimura T."/>
            <person name="Idesawa K."/>
            <person name="Kawashima K."/>
            <person name="Kishida Y."/>
            <person name="Kiyokawa C."/>
            <person name="Kohara M."/>
            <person name="Matsumoto M."/>
            <person name="Matsuno A."/>
            <person name="Muraki A."/>
            <person name="Nakayama S."/>
            <person name="Nakazaki N."/>
            <person name="Shinpo S."/>
            <person name="Takeuchi C."/>
            <person name="Wada T."/>
            <person name="Watanabe A."/>
            <person name="Yamada M."/>
            <person name="Yasuda M."/>
            <person name="Tabata S."/>
        </authorList>
    </citation>
    <scope>NUCLEOTIDE SEQUENCE [LARGE SCALE GENOMIC DNA]</scope>
    <source>
        <strain>cv. Columbia</strain>
    </source>
</reference>
<reference key="4">
    <citation type="journal article" date="2017" name="Plant J.">
        <title>Araport11: a complete reannotation of the Arabidopsis thaliana reference genome.</title>
        <authorList>
            <person name="Cheng C.Y."/>
            <person name="Krishnakumar V."/>
            <person name="Chan A.P."/>
            <person name="Thibaud-Nissen F."/>
            <person name="Schobel S."/>
            <person name="Town C.D."/>
        </authorList>
    </citation>
    <scope>GENOME REANNOTATION</scope>
    <source>
        <strain>cv. Columbia</strain>
    </source>
</reference>
<reference key="5">
    <citation type="journal article" date="2008" name="Plant Cell">
        <title>Characterization of TCTP, the translationally controlled tumor protein, from Arabidopsis thaliana.</title>
        <authorList>
            <person name="Berkowitz O."/>
            <person name="Jost R."/>
            <person name="Pollmann S."/>
            <person name="Masle J."/>
        </authorList>
    </citation>
    <scope>IDENTIFICATION AS A PSEUDOGENE</scope>
    <source>
        <strain>cv. Columbia</strain>
    </source>
</reference>
<reference key="6">
    <citation type="journal article" date="2014" name="Front. Plant Sci.">
        <title>Structural divergence of plant TCTPs.</title>
        <authorList>
            <person name="Gutierrez-Galeano D.F."/>
            <person name="Toscano-Morales R."/>
            <person name="Calderon-Perez B."/>
            <person name="Xoconostle-Cazares B."/>
            <person name="Ruiz-Medrano R."/>
        </authorList>
    </citation>
    <scope>GENE FAMILY</scope>
</reference>
<reference key="7">
    <citation type="journal article" date="2015" name="Plant Signal. Behav.">
        <title>AtTCTP2 mRNA and protein movement correlates with formation of adventitious roots in tobacco.</title>
        <authorList>
            <person name="Toscano-Morales R."/>
            <person name="Xoconostle-Cazares B."/>
            <person name="Martinez-Navarro A.C."/>
            <person name="Ruiz-Medrano R."/>
        </authorList>
    </citation>
    <scope>FUNCTION</scope>
    <scope>TISSUE SPECIFICITY</scope>
    <scope>SUBCELLULAR LOCATION</scope>
</reference>
<organism>
    <name type="scientific">Arabidopsis thaliana</name>
    <name type="common">Mouse-ear cress</name>
    <dbReference type="NCBI Taxonomy" id="3702"/>
    <lineage>
        <taxon>Eukaryota</taxon>
        <taxon>Viridiplantae</taxon>
        <taxon>Streptophyta</taxon>
        <taxon>Embryophyta</taxon>
        <taxon>Tracheophyta</taxon>
        <taxon>Spermatophyta</taxon>
        <taxon>Magnoliopsida</taxon>
        <taxon>eudicotyledons</taxon>
        <taxon>Gunneridae</taxon>
        <taxon>Pentapetalae</taxon>
        <taxon>rosids</taxon>
        <taxon>malvids</taxon>
        <taxon>Brassicales</taxon>
        <taxon>Brassicaceae</taxon>
        <taxon>Camelineae</taxon>
        <taxon>Arabidopsis</taxon>
    </lineage>
</organism>
<comment type="function">
    <text evidence="3 4 5 8">Regulates proliferation. Induces whole plant regeneration when expressed in heterologous systems (PubMed:26191065, PubMed:26237533). Involved in root growth and lateral root development, with a probable role in cell reprogramming (PubMed:25566280). The long-distance transport of TCTP RNA and/or protein in plants may have an important role in regulation of growth and development (Probable).</text>
</comment>
<comment type="subcellular location">
    <subcellularLocation>
        <location evidence="3 4 5">Nucleus</location>
    </subcellularLocation>
    <subcellularLocation>
        <location evidence="3">Cytoplasm</location>
    </subcellularLocation>
</comment>
<comment type="tissue specificity">
    <text evidence="4 5">Expressed in stems, cauline leaves, minor veins of rosette leaves, roots, lateral root primordia, vascular tissues of petioles and inflorescences, base of siliques, papillae and ovules. Not detected in root meristems, anthers or seeds (PubMed:26191065). Expressed in stomata, trichomes and root cortex (PubMed:26191065, PubMed:26237533).</text>
</comment>
<comment type="disruption phenotype">
    <text evidence="4">Seedling lethality at the early rosette stage when homozygous.</text>
</comment>
<comment type="miscellaneous">
    <text evidence="3 5">In a heterologous system, TCTP2 mRNA and protein are capable of moving long distance in both directions with a tendency for movment from source to sink tissue (PubMed:25566280, PubMed:26237533). In heterografts, the long-distance transport of TCTP2 is necessary but not sufficient to induce emergence of adventitious aerial roots in close proximity to the graft (PubMed:26237533).</text>
</comment>
<comment type="similarity">
    <text evidence="1">Belongs to the TCTP family.</text>
</comment>
<comment type="caution">
    <text evidence="2">Was initially thought to be a pseudogene.</text>
</comment>
<comment type="sequence caution" evidence="7">
    <conflict type="erroneous gene model prediction">
        <sequence resource="EMBL-CDS" id="AEE74255"/>
    </conflict>
</comment>
<feature type="chain" id="PRO_0000434727" description="Translationally controlled tumor protein 2">
    <location>
        <begin position="1"/>
        <end position="156"/>
    </location>
</feature>
<feature type="domain" description="TCTP" evidence="1">
    <location>
        <begin position="1"/>
        <end position="156"/>
    </location>
</feature>
<feature type="mutagenesis site" description="Loss of regeneration capacity." evidence="4">
    <original>N</original>
    <variation>WVTVGAVDVNIGAN</variation>
    <location>
        <position position="35"/>
    </location>
</feature>
<name>TCTP2_ARATH</name>
<gene>
    <name evidence="6" type="primary">TCTP2</name>
    <name evidence="9" type="ordered locus">At3g05540</name>
    <name evidence="10" type="ORF">F18C1.20</name>
</gene>